<accession>Q2KCG0</accession>
<proteinExistence type="inferred from homology"/>
<gene>
    <name evidence="1" type="primary">fliE</name>
    <name type="ordered locus">RHE_CH00660</name>
</gene>
<organism>
    <name type="scientific">Rhizobium etli (strain ATCC 51251 / DSM 11541 / JCM 21823 / NBRC 15573 / CFN 42)</name>
    <dbReference type="NCBI Taxonomy" id="347834"/>
    <lineage>
        <taxon>Bacteria</taxon>
        <taxon>Pseudomonadati</taxon>
        <taxon>Pseudomonadota</taxon>
        <taxon>Alphaproteobacteria</taxon>
        <taxon>Hyphomicrobiales</taxon>
        <taxon>Rhizobiaceae</taxon>
        <taxon>Rhizobium/Agrobacterium group</taxon>
        <taxon>Rhizobium</taxon>
    </lineage>
</organism>
<sequence>MISSVQNVSNLSMTRALGAVDTENSASSAATTMPGTAGAANGLSFASVLGGMASDAVNSLKGAESMSFAGIKGTATTREVVDSMLQAEQTLQTAIAIRDKVVSAFLEVTKMQM</sequence>
<name>FLIE_RHIEC</name>
<dbReference type="EMBL" id="CP000133">
    <property type="protein sequence ID" value="ABC89476.1"/>
    <property type="molecule type" value="Genomic_DNA"/>
</dbReference>
<dbReference type="RefSeq" id="WP_011424025.1">
    <property type="nucleotide sequence ID" value="NC_007761.1"/>
</dbReference>
<dbReference type="SMR" id="Q2KCG0"/>
<dbReference type="KEGG" id="ret:RHE_CH00660"/>
<dbReference type="eggNOG" id="COG1677">
    <property type="taxonomic scope" value="Bacteria"/>
</dbReference>
<dbReference type="HOGENOM" id="CLU_147249_2_0_5"/>
<dbReference type="OrthoDB" id="9812413at2"/>
<dbReference type="Proteomes" id="UP000001936">
    <property type="component" value="Chromosome"/>
</dbReference>
<dbReference type="GO" id="GO:0009425">
    <property type="term" value="C:bacterial-type flagellum basal body"/>
    <property type="evidence" value="ECO:0007669"/>
    <property type="project" value="UniProtKB-SubCell"/>
</dbReference>
<dbReference type="GO" id="GO:0003774">
    <property type="term" value="F:cytoskeletal motor activity"/>
    <property type="evidence" value="ECO:0007669"/>
    <property type="project" value="InterPro"/>
</dbReference>
<dbReference type="GO" id="GO:0005198">
    <property type="term" value="F:structural molecule activity"/>
    <property type="evidence" value="ECO:0007669"/>
    <property type="project" value="InterPro"/>
</dbReference>
<dbReference type="GO" id="GO:0071973">
    <property type="term" value="P:bacterial-type flagellum-dependent cell motility"/>
    <property type="evidence" value="ECO:0007669"/>
    <property type="project" value="InterPro"/>
</dbReference>
<dbReference type="HAMAP" id="MF_00724">
    <property type="entry name" value="FliE"/>
    <property type="match status" value="1"/>
</dbReference>
<dbReference type="InterPro" id="IPR001624">
    <property type="entry name" value="FliE"/>
</dbReference>
<dbReference type="PANTHER" id="PTHR34653">
    <property type="match status" value="1"/>
</dbReference>
<dbReference type="PANTHER" id="PTHR34653:SF1">
    <property type="entry name" value="FLAGELLAR HOOK-BASAL BODY COMPLEX PROTEIN FLIE"/>
    <property type="match status" value="1"/>
</dbReference>
<dbReference type="Pfam" id="PF02049">
    <property type="entry name" value="FliE"/>
    <property type="match status" value="1"/>
</dbReference>
<evidence type="ECO:0000255" key="1">
    <source>
        <dbReference type="HAMAP-Rule" id="MF_00724"/>
    </source>
</evidence>
<reference key="1">
    <citation type="journal article" date="2006" name="Proc. Natl. Acad. Sci. U.S.A.">
        <title>The partitioned Rhizobium etli genome: genetic and metabolic redundancy in seven interacting replicons.</title>
        <authorList>
            <person name="Gonzalez V."/>
            <person name="Santamaria R.I."/>
            <person name="Bustos P."/>
            <person name="Hernandez-Gonzalez I."/>
            <person name="Medrano-Soto A."/>
            <person name="Moreno-Hagelsieb G."/>
            <person name="Janga S.C."/>
            <person name="Ramirez M.A."/>
            <person name="Jimenez-Jacinto V."/>
            <person name="Collado-Vides J."/>
            <person name="Davila G."/>
        </authorList>
    </citation>
    <scope>NUCLEOTIDE SEQUENCE [LARGE SCALE GENOMIC DNA]</scope>
    <source>
        <strain>ATCC 51251 / DSM 11541 / JCM 21823 / NBRC 15573 / CFN 42</strain>
    </source>
</reference>
<feature type="chain" id="PRO_1000045872" description="Flagellar hook-basal body complex protein FliE">
    <location>
        <begin position="1"/>
        <end position="113"/>
    </location>
</feature>
<protein>
    <recommendedName>
        <fullName evidence="1">Flagellar hook-basal body complex protein FliE</fullName>
    </recommendedName>
</protein>
<keyword id="KW-0975">Bacterial flagellum</keyword>
<keyword id="KW-1185">Reference proteome</keyword>
<comment type="subcellular location">
    <subcellularLocation>
        <location evidence="1">Bacterial flagellum basal body</location>
    </subcellularLocation>
</comment>
<comment type="similarity">
    <text evidence="1">Belongs to the FliE family.</text>
</comment>